<gene>
    <name evidence="1" type="primary">rplR</name>
    <name evidence="1" type="synonym">rpl18</name>
    <name type="ordered locus">HI_0794</name>
</gene>
<dbReference type="EMBL" id="L42023">
    <property type="protein sequence ID" value="AAC22452.1"/>
    <property type="molecule type" value="Genomic_DNA"/>
</dbReference>
<dbReference type="PIR" id="C64094">
    <property type="entry name" value="C64094"/>
</dbReference>
<dbReference type="RefSeq" id="NP_438953.1">
    <property type="nucleotide sequence ID" value="NC_000907.1"/>
</dbReference>
<dbReference type="SMR" id="P44356"/>
<dbReference type="STRING" id="71421.HI_0794"/>
<dbReference type="EnsemblBacteria" id="AAC22452">
    <property type="protein sequence ID" value="AAC22452"/>
    <property type="gene ID" value="HI_0794"/>
</dbReference>
<dbReference type="KEGG" id="hin:HI_0794"/>
<dbReference type="PATRIC" id="fig|71421.8.peg.833"/>
<dbReference type="eggNOG" id="COG0256">
    <property type="taxonomic scope" value="Bacteria"/>
</dbReference>
<dbReference type="HOGENOM" id="CLU_098841_0_1_6"/>
<dbReference type="OrthoDB" id="9810939at2"/>
<dbReference type="PhylomeDB" id="P44356"/>
<dbReference type="BioCyc" id="HINF71421:G1GJ1-834-MONOMER"/>
<dbReference type="Proteomes" id="UP000000579">
    <property type="component" value="Chromosome"/>
</dbReference>
<dbReference type="GO" id="GO:0022625">
    <property type="term" value="C:cytosolic large ribosomal subunit"/>
    <property type="evidence" value="ECO:0000318"/>
    <property type="project" value="GO_Central"/>
</dbReference>
<dbReference type="GO" id="GO:0008097">
    <property type="term" value="F:5S rRNA binding"/>
    <property type="evidence" value="ECO:0000318"/>
    <property type="project" value="GO_Central"/>
</dbReference>
<dbReference type="GO" id="GO:0003735">
    <property type="term" value="F:structural constituent of ribosome"/>
    <property type="evidence" value="ECO:0007669"/>
    <property type="project" value="InterPro"/>
</dbReference>
<dbReference type="GO" id="GO:0006412">
    <property type="term" value="P:translation"/>
    <property type="evidence" value="ECO:0007669"/>
    <property type="project" value="UniProtKB-UniRule"/>
</dbReference>
<dbReference type="CDD" id="cd00432">
    <property type="entry name" value="Ribosomal_L18_L5e"/>
    <property type="match status" value="1"/>
</dbReference>
<dbReference type="FunFam" id="3.30.420.100:FF:000001">
    <property type="entry name" value="50S ribosomal protein L18"/>
    <property type="match status" value="1"/>
</dbReference>
<dbReference type="Gene3D" id="3.30.420.100">
    <property type="match status" value="1"/>
</dbReference>
<dbReference type="HAMAP" id="MF_01337_B">
    <property type="entry name" value="Ribosomal_uL18_B"/>
    <property type="match status" value="1"/>
</dbReference>
<dbReference type="InterPro" id="IPR004389">
    <property type="entry name" value="Ribosomal_uL18_bac-type"/>
</dbReference>
<dbReference type="InterPro" id="IPR005484">
    <property type="entry name" value="Ribosomal_uL18_bac/euk"/>
</dbReference>
<dbReference type="NCBIfam" id="TIGR00060">
    <property type="entry name" value="L18_bact"/>
    <property type="match status" value="1"/>
</dbReference>
<dbReference type="PANTHER" id="PTHR12899">
    <property type="entry name" value="39S RIBOSOMAL PROTEIN L18, MITOCHONDRIAL"/>
    <property type="match status" value="1"/>
</dbReference>
<dbReference type="PANTHER" id="PTHR12899:SF3">
    <property type="entry name" value="LARGE RIBOSOMAL SUBUNIT PROTEIN UL18M"/>
    <property type="match status" value="1"/>
</dbReference>
<dbReference type="Pfam" id="PF00861">
    <property type="entry name" value="Ribosomal_L18p"/>
    <property type="match status" value="1"/>
</dbReference>
<dbReference type="SUPFAM" id="SSF53137">
    <property type="entry name" value="Translational machinery components"/>
    <property type="match status" value="1"/>
</dbReference>
<proteinExistence type="inferred from homology"/>
<name>RL18_HAEIN</name>
<sequence length="117" mass="12768">MDKKSARIRRAARARHMMREQGVTRLVIHRTPRHIYAQVIAPNGSEVLAAASTVEKAIREQVKYTGNKDAAAAVGKAVAERALAKGVQAVAFDRSGFKYHGRVQTLADAAREAGLQF</sequence>
<organism>
    <name type="scientific">Haemophilus influenzae (strain ATCC 51907 / DSM 11121 / KW20 / Rd)</name>
    <dbReference type="NCBI Taxonomy" id="71421"/>
    <lineage>
        <taxon>Bacteria</taxon>
        <taxon>Pseudomonadati</taxon>
        <taxon>Pseudomonadota</taxon>
        <taxon>Gammaproteobacteria</taxon>
        <taxon>Pasteurellales</taxon>
        <taxon>Pasteurellaceae</taxon>
        <taxon>Haemophilus</taxon>
    </lineage>
</organism>
<feature type="chain" id="PRO_0000131272" description="Large ribosomal subunit protein uL18">
    <location>
        <begin position="1"/>
        <end position="117"/>
    </location>
</feature>
<keyword id="KW-1185">Reference proteome</keyword>
<keyword id="KW-0687">Ribonucleoprotein</keyword>
<keyword id="KW-0689">Ribosomal protein</keyword>
<keyword id="KW-0694">RNA-binding</keyword>
<keyword id="KW-0699">rRNA-binding</keyword>
<protein>
    <recommendedName>
        <fullName evidence="1">Large ribosomal subunit protein uL18</fullName>
    </recommendedName>
    <alternativeName>
        <fullName evidence="2">50S ribosomal protein L18</fullName>
    </alternativeName>
</protein>
<comment type="function">
    <text evidence="1">This is one of the proteins that bind and probably mediate the attachment of the 5S RNA into the large ribosomal subunit, where it forms part of the central protuberance.</text>
</comment>
<comment type="subunit">
    <text evidence="1">Part of the 50S ribosomal subunit; part of the 5S rRNA/L5/L18/L25 subcomplex. Contacts the 5S and 23S rRNAs.</text>
</comment>
<comment type="similarity">
    <text evidence="1">Belongs to the universal ribosomal protein uL18 family.</text>
</comment>
<reference key="1">
    <citation type="journal article" date="1995" name="Science">
        <title>Whole-genome random sequencing and assembly of Haemophilus influenzae Rd.</title>
        <authorList>
            <person name="Fleischmann R.D."/>
            <person name="Adams M.D."/>
            <person name="White O."/>
            <person name="Clayton R.A."/>
            <person name="Kirkness E.F."/>
            <person name="Kerlavage A.R."/>
            <person name="Bult C.J."/>
            <person name="Tomb J.-F."/>
            <person name="Dougherty B.A."/>
            <person name="Merrick J.M."/>
            <person name="McKenney K."/>
            <person name="Sutton G.G."/>
            <person name="FitzHugh W."/>
            <person name="Fields C.A."/>
            <person name="Gocayne J.D."/>
            <person name="Scott J.D."/>
            <person name="Shirley R."/>
            <person name="Liu L.-I."/>
            <person name="Glodek A."/>
            <person name="Kelley J.M."/>
            <person name="Weidman J.F."/>
            <person name="Phillips C.A."/>
            <person name="Spriggs T."/>
            <person name="Hedblom E."/>
            <person name="Cotton M.D."/>
            <person name="Utterback T.R."/>
            <person name="Hanna M.C."/>
            <person name="Nguyen D.T."/>
            <person name="Saudek D.M."/>
            <person name="Brandon R.C."/>
            <person name="Fine L.D."/>
            <person name="Fritchman J.L."/>
            <person name="Fuhrmann J.L."/>
            <person name="Geoghagen N.S.M."/>
            <person name="Gnehm C.L."/>
            <person name="McDonald L.A."/>
            <person name="Small K.V."/>
            <person name="Fraser C.M."/>
            <person name="Smith H.O."/>
            <person name="Venter J.C."/>
        </authorList>
    </citation>
    <scope>NUCLEOTIDE SEQUENCE [LARGE SCALE GENOMIC DNA]</scope>
    <source>
        <strain>ATCC 51907 / DSM 11121 / KW20 / Rd</strain>
    </source>
</reference>
<accession>P44356</accession>
<evidence type="ECO:0000255" key="1">
    <source>
        <dbReference type="HAMAP-Rule" id="MF_01337"/>
    </source>
</evidence>
<evidence type="ECO:0000305" key="2"/>